<gene>
    <name evidence="1" type="primary">iscR</name>
    <name type="ordered locus">Ecok1_24640</name>
    <name type="ORF">APECO1_3994</name>
</gene>
<feature type="chain" id="PRO_1000085417" description="HTH-type transcriptional regulator IscR">
    <location>
        <begin position="1"/>
        <end position="162"/>
    </location>
</feature>
<feature type="domain" description="HTH rrf2-type" evidence="1">
    <location>
        <begin position="2"/>
        <end position="131"/>
    </location>
</feature>
<feature type="DNA-binding region" description="H-T-H motif" evidence="1">
    <location>
        <begin position="28"/>
        <end position="51"/>
    </location>
</feature>
<feature type="region of interest" description="Disordered" evidence="2">
    <location>
        <begin position="140"/>
        <end position="162"/>
    </location>
</feature>
<feature type="compositionally biased region" description="Basic and acidic residues" evidence="2">
    <location>
        <begin position="143"/>
        <end position="162"/>
    </location>
</feature>
<feature type="binding site" evidence="1">
    <location>
        <position position="92"/>
    </location>
    <ligand>
        <name>[2Fe-2S] cluster</name>
        <dbReference type="ChEBI" id="CHEBI:190135"/>
    </ligand>
</feature>
<feature type="binding site" evidence="1">
    <location>
        <position position="98"/>
    </location>
    <ligand>
        <name>[2Fe-2S] cluster</name>
        <dbReference type="ChEBI" id="CHEBI:190135"/>
    </ligand>
</feature>
<feature type="binding site" evidence="1">
    <location>
        <position position="104"/>
    </location>
    <ligand>
        <name>[2Fe-2S] cluster</name>
        <dbReference type="ChEBI" id="CHEBI:190135"/>
    </ligand>
</feature>
<protein>
    <recommendedName>
        <fullName evidence="1">HTH-type transcriptional regulator IscR</fullName>
    </recommendedName>
</protein>
<accession>A1AE68</accession>
<evidence type="ECO:0000255" key="1">
    <source>
        <dbReference type="HAMAP-Rule" id="MF_01176"/>
    </source>
</evidence>
<evidence type="ECO:0000256" key="2">
    <source>
        <dbReference type="SAM" id="MobiDB-lite"/>
    </source>
</evidence>
<dbReference type="EMBL" id="CP000468">
    <property type="protein sequence ID" value="ABJ01958.1"/>
    <property type="molecule type" value="Genomic_DNA"/>
</dbReference>
<dbReference type="RefSeq" id="WP_001241357.1">
    <property type="nucleotide sequence ID" value="NZ_CADILS010000012.1"/>
</dbReference>
<dbReference type="SMR" id="A1AE68"/>
<dbReference type="GeneID" id="86947421"/>
<dbReference type="KEGG" id="ecv:APECO1_3994"/>
<dbReference type="HOGENOM" id="CLU_107144_0_0_6"/>
<dbReference type="Proteomes" id="UP000008216">
    <property type="component" value="Chromosome"/>
</dbReference>
<dbReference type="GO" id="GO:0005829">
    <property type="term" value="C:cytosol"/>
    <property type="evidence" value="ECO:0007669"/>
    <property type="project" value="TreeGrafter"/>
</dbReference>
<dbReference type="GO" id="GO:0051537">
    <property type="term" value="F:2 iron, 2 sulfur cluster binding"/>
    <property type="evidence" value="ECO:0007669"/>
    <property type="project" value="UniProtKB-KW"/>
</dbReference>
<dbReference type="GO" id="GO:0003700">
    <property type="term" value="F:DNA-binding transcription factor activity"/>
    <property type="evidence" value="ECO:0007669"/>
    <property type="project" value="UniProtKB-UniRule"/>
</dbReference>
<dbReference type="GO" id="GO:0003690">
    <property type="term" value="F:double-stranded DNA binding"/>
    <property type="evidence" value="ECO:0007669"/>
    <property type="project" value="UniProtKB-UniRule"/>
</dbReference>
<dbReference type="GO" id="GO:0005506">
    <property type="term" value="F:iron ion binding"/>
    <property type="evidence" value="ECO:0007669"/>
    <property type="project" value="UniProtKB-UniRule"/>
</dbReference>
<dbReference type="FunFam" id="1.10.10.10:FF:000026">
    <property type="entry name" value="HTH-type transcriptional regulator IscR"/>
    <property type="match status" value="1"/>
</dbReference>
<dbReference type="Gene3D" id="1.10.10.10">
    <property type="entry name" value="Winged helix-like DNA-binding domain superfamily/Winged helix DNA-binding domain"/>
    <property type="match status" value="1"/>
</dbReference>
<dbReference type="HAMAP" id="MF_01176">
    <property type="entry name" value="HTH_type_IscR"/>
    <property type="match status" value="1"/>
</dbReference>
<dbReference type="InterPro" id="IPR010242">
    <property type="entry name" value="TF_HTH_IscR"/>
</dbReference>
<dbReference type="InterPro" id="IPR030489">
    <property type="entry name" value="TR_Rrf2-type_CS"/>
</dbReference>
<dbReference type="InterPro" id="IPR000944">
    <property type="entry name" value="Tscrpt_reg_Rrf2"/>
</dbReference>
<dbReference type="InterPro" id="IPR036388">
    <property type="entry name" value="WH-like_DNA-bd_sf"/>
</dbReference>
<dbReference type="InterPro" id="IPR036390">
    <property type="entry name" value="WH_DNA-bd_sf"/>
</dbReference>
<dbReference type="NCBIfam" id="TIGR02010">
    <property type="entry name" value="IscR"/>
    <property type="match status" value="1"/>
</dbReference>
<dbReference type="NCBIfam" id="NF008110">
    <property type="entry name" value="PRK10857.1"/>
    <property type="match status" value="1"/>
</dbReference>
<dbReference type="NCBIfam" id="TIGR00738">
    <property type="entry name" value="rrf2_super"/>
    <property type="match status" value="1"/>
</dbReference>
<dbReference type="PANTHER" id="PTHR33221:SF5">
    <property type="entry name" value="HTH-TYPE TRANSCRIPTIONAL REGULATOR ISCR"/>
    <property type="match status" value="1"/>
</dbReference>
<dbReference type="PANTHER" id="PTHR33221">
    <property type="entry name" value="WINGED HELIX-TURN-HELIX TRANSCRIPTIONAL REGULATOR, RRF2 FAMILY"/>
    <property type="match status" value="1"/>
</dbReference>
<dbReference type="Pfam" id="PF02082">
    <property type="entry name" value="Rrf2"/>
    <property type="match status" value="1"/>
</dbReference>
<dbReference type="SUPFAM" id="SSF46785">
    <property type="entry name" value="Winged helix' DNA-binding domain"/>
    <property type="match status" value="1"/>
</dbReference>
<dbReference type="PROSITE" id="PS01332">
    <property type="entry name" value="HTH_RRF2_1"/>
    <property type="match status" value="1"/>
</dbReference>
<dbReference type="PROSITE" id="PS51197">
    <property type="entry name" value="HTH_RRF2_2"/>
    <property type="match status" value="1"/>
</dbReference>
<name>ISCR_ECOK1</name>
<comment type="function">
    <text evidence="1">Regulates the transcription of several operons and genes involved in the biogenesis of Fe-S clusters and Fe-S-containing proteins.</text>
</comment>
<comment type="cofactor">
    <cofactor evidence="1">
        <name>[2Fe-2S] cluster</name>
        <dbReference type="ChEBI" id="CHEBI:190135"/>
    </cofactor>
    <text evidence="1">Binds 1 [2Fe-2S] cluster.</text>
</comment>
<reference key="1">
    <citation type="journal article" date="2007" name="J. Bacteriol.">
        <title>The genome sequence of avian pathogenic Escherichia coli strain O1:K1:H7 shares strong similarities with human extraintestinal pathogenic E. coli genomes.</title>
        <authorList>
            <person name="Johnson T.J."/>
            <person name="Kariyawasam S."/>
            <person name="Wannemuehler Y."/>
            <person name="Mangiamele P."/>
            <person name="Johnson S.J."/>
            <person name="Doetkott C."/>
            <person name="Skyberg J.A."/>
            <person name="Lynne A.M."/>
            <person name="Johnson J.R."/>
            <person name="Nolan L.K."/>
        </authorList>
    </citation>
    <scope>NUCLEOTIDE SEQUENCE [LARGE SCALE GENOMIC DNA]</scope>
</reference>
<sequence>MRLTSKGRYAVTAMLDVALNSEAGPVPLADISERQGISLSYLEQLFSRLRKNGLVSSVRGPGGGYLLGKDASSIAVGEVISAVDESVDATRCQGKGGCQGGDKCLTHALWRDLSDRLTGFLNNITLGELVNNQEVLDVSGRQHTHDAPRTRTQDAIDVKLRA</sequence>
<organism>
    <name type="scientific">Escherichia coli O1:K1 / APEC</name>
    <dbReference type="NCBI Taxonomy" id="405955"/>
    <lineage>
        <taxon>Bacteria</taxon>
        <taxon>Pseudomonadati</taxon>
        <taxon>Pseudomonadota</taxon>
        <taxon>Gammaproteobacteria</taxon>
        <taxon>Enterobacterales</taxon>
        <taxon>Enterobacteriaceae</taxon>
        <taxon>Escherichia</taxon>
    </lineage>
</organism>
<proteinExistence type="inferred from homology"/>
<keyword id="KW-0001">2Fe-2S</keyword>
<keyword id="KW-0010">Activator</keyword>
<keyword id="KW-0238">DNA-binding</keyword>
<keyword id="KW-0408">Iron</keyword>
<keyword id="KW-0411">Iron-sulfur</keyword>
<keyword id="KW-0479">Metal-binding</keyword>
<keyword id="KW-1185">Reference proteome</keyword>
<keyword id="KW-0678">Repressor</keyword>
<keyword id="KW-0804">Transcription</keyword>
<keyword id="KW-0805">Transcription regulation</keyword>